<proteinExistence type="evidence at protein level"/>
<comment type="function">
    <text>Antenna complexes are light-harvesting systems, which transfer the excitation energy to the reaction centers.</text>
</comment>
<comment type="subunit">
    <text>The core complex is formed by different alpha and beta chains, binding bacteriochlorophyll molecules, and arranged most probably in tetrameric structures disposed around the reaction center. The non-pigmented gamma chains may constitute additional components.</text>
</comment>
<comment type="subcellular location">
    <subcellularLocation>
        <location>Cell membrane</location>
        <topology>Single-pass type II membrane protein</topology>
    </subcellularLocation>
</comment>
<comment type="similarity">
    <text evidence="3">Belongs to the antenna complex alpha subunit family.</text>
</comment>
<keyword id="KW-0002">3D-structure</keyword>
<keyword id="KW-0042">Antenna complex</keyword>
<keyword id="KW-0076">Bacteriochlorophyll</keyword>
<keyword id="KW-1003">Cell membrane</keyword>
<keyword id="KW-0148">Chlorophyll</keyword>
<keyword id="KW-0157">Chromophore</keyword>
<keyword id="KW-0903">Direct protein sequencing</keyword>
<keyword id="KW-0291">Formylation</keyword>
<keyword id="KW-0437">Light-harvesting polypeptide</keyword>
<keyword id="KW-0460">Magnesium</keyword>
<keyword id="KW-0472">Membrane</keyword>
<keyword id="KW-0479">Metal-binding</keyword>
<keyword id="KW-1185">Reference proteome</keyword>
<keyword id="KW-0812">Transmembrane</keyword>
<keyword id="KW-1133">Transmembrane helix</keyword>
<dbReference type="EMBL" id="X73899">
    <property type="protein sequence ID" value="CAA52105.1"/>
    <property type="molecule type" value="Genomic_DNA"/>
</dbReference>
<dbReference type="EMBL" id="CP000909">
    <property type="protein sequence ID" value="ABY35302.1"/>
    <property type="molecule type" value="Genomic_DNA"/>
</dbReference>
<dbReference type="PIR" id="I40618">
    <property type="entry name" value="I40618"/>
</dbReference>
<dbReference type="RefSeq" id="WP_012257956.1">
    <property type="nucleotide sequence ID" value="NC_010175.1"/>
</dbReference>
<dbReference type="RefSeq" id="YP_001635691.1">
    <property type="nucleotide sequence ID" value="NC_010175.1"/>
</dbReference>
<dbReference type="PDB" id="8YDM">
    <property type="method" value="EM"/>
    <property type="resolution" value="3.05 A"/>
    <property type="chains" value="A/D/F/H/J/O/Q=1-57"/>
</dbReference>
<dbReference type="PDBsum" id="8YDM"/>
<dbReference type="EMDB" id="EMD-39177"/>
<dbReference type="SMR" id="P07503"/>
<dbReference type="STRING" id="324602.Caur_2090"/>
<dbReference type="EnsemblBacteria" id="ABY35302">
    <property type="protein sequence ID" value="ABY35302"/>
    <property type="gene ID" value="Caur_2090"/>
</dbReference>
<dbReference type="KEGG" id="cau:Caur_2090"/>
<dbReference type="PATRIC" id="fig|324602.8.peg.2370"/>
<dbReference type="HOGENOM" id="CLU_3005767_0_0_0"/>
<dbReference type="InParanoid" id="P07503"/>
<dbReference type="Proteomes" id="UP000002008">
    <property type="component" value="Chromosome"/>
</dbReference>
<dbReference type="GO" id="GO:0019866">
    <property type="term" value="C:organelle inner membrane"/>
    <property type="evidence" value="ECO:0007669"/>
    <property type="project" value="InterPro"/>
</dbReference>
<dbReference type="GO" id="GO:0005886">
    <property type="term" value="C:plasma membrane"/>
    <property type="evidence" value="ECO:0007669"/>
    <property type="project" value="UniProtKB-SubCell"/>
</dbReference>
<dbReference type="GO" id="GO:0030077">
    <property type="term" value="C:plasma membrane light-harvesting complex"/>
    <property type="evidence" value="ECO:0007669"/>
    <property type="project" value="InterPro"/>
</dbReference>
<dbReference type="GO" id="GO:0042314">
    <property type="term" value="F:bacteriochlorophyll binding"/>
    <property type="evidence" value="ECO:0007669"/>
    <property type="project" value="UniProtKB-KW"/>
</dbReference>
<dbReference type="GO" id="GO:0045156">
    <property type="term" value="F:electron transporter, transferring electrons within the cyclic electron transport pathway of photosynthesis activity"/>
    <property type="evidence" value="ECO:0007669"/>
    <property type="project" value="InterPro"/>
</dbReference>
<dbReference type="GO" id="GO:0046872">
    <property type="term" value="F:metal ion binding"/>
    <property type="evidence" value="ECO:0007669"/>
    <property type="project" value="UniProtKB-KW"/>
</dbReference>
<dbReference type="GO" id="GO:0019684">
    <property type="term" value="P:photosynthesis, light reaction"/>
    <property type="evidence" value="ECO:0007669"/>
    <property type="project" value="InterPro"/>
</dbReference>
<dbReference type="Gene3D" id="4.10.220.20">
    <property type="entry name" value="Light-harvesting complex"/>
    <property type="match status" value="1"/>
</dbReference>
<dbReference type="InterPro" id="IPR000066">
    <property type="entry name" value="Antenna_a/b"/>
</dbReference>
<dbReference type="InterPro" id="IPR018332">
    <property type="entry name" value="Antenna_alpha"/>
</dbReference>
<dbReference type="InterPro" id="IPR002361">
    <property type="entry name" value="Antenna_alpha_CS"/>
</dbReference>
<dbReference type="InterPro" id="IPR035889">
    <property type="entry name" value="Light-harvesting_complex"/>
</dbReference>
<dbReference type="NCBIfam" id="NF040861">
    <property type="entry name" value="pufA_517_ASD"/>
    <property type="match status" value="1"/>
</dbReference>
<dbReference type="Pfam" id="PF00556">
    <property type="entry name" value="LHC"/>
    <property type="match status" value="1"/>
</dbReference>
<dbReference type="SUPFAM" id="SSF56918">
    <property type="entry name" value="Light-harvesting complex subunits"/>
    <property type="match status" value="1"/>
</dbReference>
<dbReference type="PROSITE" id="PS00968">
    <property type="entry name" value="ANTENNA_COMP_ALPHA"/>
    <property type="match status" value="1"/>
</dbReference>
<protein>
    <recommendedName>
        <fullName>Light-harvesting protein B-808/866 alpha chain</fullName>
    </recommendedName>
    <alternativeName>
        <fullName>Antenna pigment protein alpha chain</fullName>
    </alternativeName>
    <alternativeName>
        <fullName>Bacteriochlorophyll a-binding protein</fullName>
    </alternativeName>
</protein>
<accession>P07503</accession>
<accession>A9WEY7</accession>
<feature type="chain" id="PRO_0000099777" description="Light-harvesting protein B-808/866 alpha chain">
    <location>
        <begin position="1"/>
        <end position="57"/>
    </location>
</feature>
<feature type="topological domain" description="Cytoplasmic" evidence="1">
    <location>
        <begin position="1"/>
        <end position="10"/>
    </location>
</feature>
<feature type="transmembrane region" description="Helical" evidence="1">
    <location>
        <begin position="11"/>
        <end position="30"/>
    </location>
</feature>
<feature type="topological domain" description="Periplasmic" evidence="1">
    <location>
        <begin position="31"/>
        <end position="57"/>
    </location>
</feature>
<feature type="binding site" description="axial binding residue" evidence="1">
    <location>
        <position position="26"/>
    </location>
    <ligand>
        <name>a bacteriochlorophyll</name>
        <dbReference type="ChEBI" id="CHEBI:38201"/>
    </ligand>
    <ligandPart>
        <name>Mg</name>
        <dbReference type="ChEBI" id="CHEBI:25107"/>
    </ligandPart>
</feature>
<feature type="modified residue" description="N-formylmethionine" evidence="2">
    <location>
        <position position="1"/>
    </location>
</feature>
<sequence length="57" mass="6198">MQPRSPVRTNIVIFTILGFVVALLIHFIVLSSPEYNWLSNAEGGALLLSAARALFGI</sequence>
<evidence type="ECO:0000255" key="1"/>
<evidence type="ECO:0000269" key="2">
    <source ref="3"/>
</evidence>
<evidence type="ECO:0000305" key="3"/>
<reference key="1">
    <citation type="journal article" date="1995" name="Arch. Microbiol.">
        <title>Cloning and sequencing of the genes encoding the light-harvesting B806-866 polypeptides and initial studies on the transcriptional organization of puf2B, puf2A and puf2C in Chloroflexus aurantiacus.</title>
        <authorList>
            <person name="Watanabe Y."/>
            <person name="Feick R.G."/>
            <person name="Shiozawa J.A."/>
        </authorList>
    </citation>
    <scope>NUCLEOTIDE SEQUENCE [GENOMIC DNA]</scope>
</reference>
<reference key="2">
    <citation type="journal article" date="2011" name="BMC Genomics">
        <title>Complete genome sequence of the filamentous anoxygenic phototrophic bacterium Chloroflexus aurantiacus.</title>
        <authorList>
            <person name="Tang K.H."/>
            <person name="Barry K."/>
            <person name="Chertkov O."/>
            <person name="Dalin E."/>
            <person name="Han C.S."/>
            <person name="Hauser L.J."/>
            <person name="Honchak B.M."/>
            <person name="Karbach L.E."/>
            <person name="Land M.L."/>
            <person name="Lapidus A."/>
            <person name="Larimer F.W."/>
            <person name="Mikhailova N."/>
            <person name="Pitluck S."/>
            <person name="Pierson B.K."/>
            <person name="Blankenship R.E."/>
        </authorList>
    </citation>
    <scope>NUCLEOTIDE SEQUENCE [LARGE SCALE GENOMIC DNA]</scope>
    <source>
        <strain>ATCC 29366 / DSM 635 / J-10-fl</strain>
    </source>
</reference>
<reference key="3">
    <citation type="journal article" date="1985" name="FEBS Lett.">
        <title>The complete amino acid sequence of a bacteriochlorophyll a binding polypeptide isolated from the cytoplasmic membrane of the green photosynthetic bacterium Chloroflexus aurantiacus.</title>
        <authorList>
            <person name="Wechsler T."/>
            <person name="Brunisholz R.A."/>
            <person name="Suter F."/>
            <person name="Fuller R.C."/>
            <person name="Zuber H."/>
        </authorList>
    </citation>
    <scope>PROTEIN SEQUENCE OF 1-44</scope>
    <scope>FORMYLATION AT MET-1</scope>
</reference>
<gene>
    <name type="primary">puf2A</name>
    <name type="ordered locus">Caur_2090</name>
</gene>
<name>LHA_CHLAA</name>
<organism>
    <name type="scientific">Chloroflexus aurantiacus (strain ATCC 29366 / DSM 635 / J-10-fl)</name>
    <dbReference type="NCBI Taxonomy" id="324602"/>
    <lineage>
        <taxon>Bacteria</taxon>
        <taxon>Bacillati</taxon>
        <taxon>Chloroflexota</taxon>
        <taxon>Chloroflexia</taxon>
        <taxon>Chloroflexales</taxon>
        <taxon>Chloroflexineae</taxon>
        <taxon>Chloroflexaceae</taxon>
        <taxon>Chloroflexus</taxon>
    </lineage>
</organism>